<name>FOLD_NITEU</name>
<organism>
    <name type="scientific">Nitrosomonas europaea (strain ATCC 19718 / CIP 103999 / KCTC 2705 / NBRC 14298)</name>
    <dbReference type="NCBI Taxonomy" id="228410"/>
    <lineage>
        <taxon>Bacteria</taxon>
        <taxon>Pseudomonadati</taxon>
        <taxon>Pseudomonadota</taxon>
        <taxon>Betaproteobacteria</taxon>
        <taxon>Nitrosomonadales</taxon>
        <taxon>Nitrosomonadaceae</taxon>
        <taxon>Nitrosomonas</taxon>
    </lineage>
</organism>
<dbReference type="EC" id="1.5.1.5" evidence="1"/>
<dbReference type="EC" id="3.5.4.9" evidence="1"/>
<dbReference type="EMBL" id="AL954747">
    <property type="protein sequence ID" value="CAD84273.1"/>
    <property type="molecule type" value="Genomic_DNA"/>
</dbReference>
<dbReference type="RefSeq" id="WP_011110997.1">
    <property type="nucleotide sequence ID" value="NC_004757.1"/>
</dbReference>
<dbReference type="SMR" id="Q82XC3"/>
<dbReference type="STRING" id="228410.NE0362"/>
<dbReference type="GeneID" id="87103568"/>
<dbReference type="KEGG" id="neu:NE0362"/>
<dbReference type="eggNOG" id="COG0190">
    <property type="taxonomic scope" value="Bacteria"/>
</dbReference>
<dbReference type="HOGENOM" id="CLU_034045_2_1_4"/>
<dbReference type="OrthoDB" id="9803580at2"/>
<dbReference type="PhylomeDB" id="Q82XC3"/>
<dbReference type="UniPathway" id="UPA00193"/>
<dbReference type="Proteomes" id="UP000001416">
    <property type="component" value="Chromosome"/>
</dbReference>
<dbReference type="GO" id="GO:0005829">
    <property type="term" value="C:cytosol"/>
    <property type="evidence" value="ECO:0007669"/>
    <property type="project" value="TreeGrafter"/>
</dbReference>
<dbReference type="GO" id="GO:0004477">
    <property type="term" value="F:methenyltetrahydrofolate cyclohydrolase activity"/>
    <property type="evidence" value="ECO:0007669"/>
    <property type="project" value="UniProtKB-UniRule"/>
</dbReference>
<dbReference type="GO" id="GO:0004488">
    <property type="term" value="F:methylenetetrahydrofolate dehydrogenase (NADP+) activity"/>
    <property type="evidence" value="ECO:0007669"/>
    <property type="project" value="UniProtKB-UniRule"/>
</dbReference>
<dbReference type="GO" id="GO:0000105">
    <property type="term" value="P:L-histidine biosynthetic process"/>
    <property type="evidence" value="ECO:0007669"/>
    <property type="project" value="UniProtKB-KW"/>
</dbReference>
<dbReference type="GO" id="GO:0009086">
    <property type="term" value="P:methionine biosynthetic process"/>
    <property type="evidence" value="ECO:0007669"/>
    <property type="project" value="UniProtKB-KW"/>
</dbReference>
<dbReference type="GO" id="GO:0006164">
    <property type="term" value="P:purine nucleotide biosynthetic process"/>
    <property type="evidence" value="ECO:0007669"/>
    <property type="project" value="UniProtKB-KW"/>
</dbReference>
<dbReference type="GO" id="GO:0035999">
    <property type="term" value="P:tetrahydrofolate interconversion"/>
    <property type="evidence" value="ECO:0007669"/>
    <property type="project" value="UniProtKB-UniRule"/>
</dbReference>
<dbReference type="CDD" id="cd01080">
    <property type="entry name" value="NAD_bind_m-THF_DH_Cyclohyd"/>
    <property type="match status" value="1"/>
</dbReference>
<dbReference type="FunFam" id="3.40.50.720:FF:000094">
    <property type="entry name" value="Bifunctional protein FolD"/>
    <property type="match status" value="1"/>
</dbReference>
<dbReference type="FunFam" id="3.40.50.10860:FF:000005">
    <property type="entry name" value="C-1-tetrahydrofolate synthase, cytoplasmic, putative"/>
    <property type="match status" value="1"/>
</dbReference>
<dbReference type="Gene3D" id="3.40.50.10860">
    <property type="entry name" value="Leucine Dehydrogenase, chain A, domain 1"/>
    <property type="match status" value="1"/>
</dbReference>
<dbReference type="Gene3D" id="3.40.50.720">
    <property type="entry name" value="NAD(P)-binding Rossmann-like Domain"/>
    <property type="match status" value="1"/>
</dbReference>
<dbReference type="HAMAP" id="MF_01576">
    <property type="entry name" value="THF_DHG_CYH"/>
    <property type="match status" value="1"/>
</dbReference>
<dbReference type="InterPro" id="IPR046346">
    <property type="entry name" value="Aminoacid_DH-like_N_sf"/>
</dbReference>
<dbReference type="InterPro" id="IPR036291">
    <property type="entry name" value="NAD(P)-bd_dom_sf"/>
</dbReference>
<dbReference type="InterPro" id="IPR000672">
    <property type="entry name" value="THF_DH/CycHdrlase"/>
</dbReference>
<dbReference type="InterPro" id="IPR020630">
    <property type="entry name" value="THF_DH/CycHdrlase_cat_dom"/>
</dbReference>
<dbReference type="InterPro" id="IPR020867">
    <property type="entry name" value="THF_DH/CycHdrlase_CS"/>
</dbReference>
<dbReference type="InterPro" id="IPR020631">
    <property type="entry name" value="THF_DH/CycHdrlase_NAD-bd_dom"/>
</dbReference>
<dbReference type="NCBIfam" id="NF008058">
    <property type="entry name" value="PRK10792.1"/>
    <property type="match status" value="1"/>
</dbReference>
<dbReference type="NCBIfam" id="NF010783">
    <property type="entry name" value="PRK14186.1"/>
    <property type="match status" value="1"/>
</dbReference>
<dbReference type="NCBIfam" id="NF010786">
    <property type="entry name" value="PRK14189.1"/>
    <property type="match status" value="1"/>
</dbReference>
<dbReference type="PANTHER" id="PTHR48099:SF5">
    <property type="entry name" value="C-1-TETRAHYDROFOLATE SYNTHASE, CYTOPLASMIC"/>
    <property type="match status" value="1"/>
</dbReference>
<dbReference type="PANTHER" id="PTHR48099">
    <property type="entry name" value="C-1-TETRAHYDROFOLATE SYNTHASE, CYTOPLASMIC-RELATED"/>
    <property type="match status" value="1"/>
</dbReference>
<dbReference type="Pfam" id="PF00763">
    <property type="entry name" value="THF_DHG_CYH"/>
    <property type="match status" value="1"/>
</dbReference>
<dbReference type="Pfam" id="PF02882">
    <property type="entry name" value="THF_DHG_CYH_C"/>
    <property type="match status" value="1"/>
</dbReference>
<dbReference type="PRINTS" id="PR00085">
    <property type="entry name" value="THFDHDRGNASE"/>
</dbReference>
<dbReference type="SUPFAM" id="SSF53223">
    <property type="entry name" value="Aminoacid dehydrogenase-like, N-terminal domain"/>
    <property type="match status" value="1"/>
</dbReference>
<dbReference type="SUPFAM" id="SSF51735">
    <property type="entry name" value="NAD(P)-binding Rossmann-fold domains"/>
    <property type="match status" value="1"/>
</dbReference>
<dbReference type="PROSITE" id="PS00767">
    <property type="entry name" value="THF_DHG_CYH_2"/>
    <property type="match status" value="1"/>
</dbReference>
<proteinExistence type="inferred from homology"/>
<keyword id="KW-0028">Amino-acid biosynthesis</keyword>
<keyword id="KW-0368">Histidine biosynthesis</keyword>
<keyword id="KW-0378">Hydrolase</keyword>
<keyword id="KW-0486">Methionine biosynthesis</keyword>
<keyword id="KW-0511">Multifunctional enzyme</keyword>
<keyword id="KW-0521">NADP</keyword>
<keyword id="KW-0554">One-carbon metabolism</keyword>
<keyword id="KW-0560">Oxidoreductase</keyword>
<keyword id="KW-0658">Purine biosynthesis</keyword>
<keyword id="KW-1185">Reference proteome</keyword>
<comment type="function">
    <text evidence="1">Catalyzes the oxidation of 5,10-methylenetetrahydrofolate to 5,10-methenyltetrahydrofolate and then the hydrolysis of 5,10-methenyltetrahydrofolate to 10-formyltetrahydrofolate.</text>
</comment>
<comment type="catalytic activity">
    <reaction evidence="1">
        <text>(6R)-5,10-methylene-5,6,7,8-tetrahydrofolate + NADP(+) = (6R)-5,10-methenyltetrahydrofolate + NADPH</text>
        <dbReference type="Rhea" id="RHEA:22812"/>
        <dbReference type="ChEBI" id="CHEBI:15636"/>
        <dbReference type="ChEBI" id="CHEBI:57455"/>
        <dbReference type="ChEBI" id="CHEBI:57783"/>
        <dbReference type="ChEBI" id="CHEBI:58349"/>
        <dbReference type="EC" id="1.5.1.5"/>
    </reaction>
</comment>
<comment type="catalytic activity">
    <reaction evidence="1">
        <text>(6R)-5,10-methenyltetrahydrofolate + H2O = (6R)-10-formyltetrahydrofolate + H(+)</text>
        <dbReference type="Rhea" id="RHEA:23700"/>
        <dbReference type="ChEBI" id="CHEBI:15377"/>
        <dbReference type="ChEBI" id="CHEBI:15378"/>
        <dbReference type="ChEBI" id="CHEBI:57455"/>
        <dbReference type="ChEBI" id="CHEBI:195366"/>
        <dbReference type="EC" id="3.5.4.9"/>
    </reaction>
</comment>
<comment type="pathway">
    <text evidence="1">One-carbon metabolism; tetrahydrofolate interconversion.</text>
</comment>
<comment type="subunit">
    <text evidence="1">Homodimer.</text>
</comment>
<comment type="similarity">
    <text evidence="1">Belongs to the tetrahydrofolate dehydrogenase/cyclohydrolase family.</text>
</comment>
<protein>
    <recommendedName>
        <fullName evidence="1">Bifunctional protein FolD</fullName>
    </recommendedName>
    <domain>
        <recommendedName>
            <fullName evidence="1">Methylenetetrahydrofolate dehydrogenase</fullName>
            <ecNumber evidence="1">1.5.1.5</ecNumber>
        </recommendedName>
    </domain>
    <domain>
        <recommendedName>
            <fullName evidence="1">Methenyltetrahydrofolate cyclohydrolase</fullName>
            <ecNumber evidence="1">3.5.4.9</ecNumber>
        </recommendedName>
    </domain>
</protein>
<gene>
    <name evidence="1" type="primary">folD</name>
    <name type="ordered locus">NE0362</name>
</gene>
<reference key="1">
    <citation type="journal article" date="2003" name="J. Bacteriol.">
        <title>Complete genome sequence of the ammonia-oxidizing bacterium and obligate chemolithoautotroph Nitrosomonas europaea.</title>
        <authorList>
            <person name="Chain P."/>
            <person name="Lamerdin J.E."/>
            <person name="Larimer F.W."/>
            <person name="Regala W."/>
            <person name="Lao V."/>
            <person name="Land M.L."/>
            <person name="Hauser L."/>
            <person name="Hooper A.B."/>
            <person name="Klotz M.G."/>
            <person name="Norton J."/>
            <person name="Sayavedra-Soto L.A."/>
            <person name="Arciero D.M."/>
            <person name="Hommes N.G."/>
            <person name="Whittaker M.M."/>
            <person name="Arp D.J."/>
        </authorList>
    </citation>
    <scope>NUCLEOTIDE SEQUENCE [LARGE SCALE GENOMIC DNA]</scope>
    <source>
        <strain>ATCC 19718 / CIP 103999 / KCTC 2705 / NBRC 14298</strain>
    </source>
</reference>
<sequence>MSATIISGSLIASKFREELKQRVKILSETWMQPGLAVILAGDNPASCVYVRNKAKTCEELGIRSEIFNFPGDISQKALLQQIQDLNVNPEIHGILVQLPLPGHIRIDEVIAAIAIGKDVDGFHPCNVGALVTGHALFHPCTPFGVMKMLAEYDIPLQGQHAVIIGRSNIVGKPMALMLLEKGATVTVCTSRTRDLASHTRNADIVVMAAGKANLLTSDMIRTGATVIDVGINRLADGRLCGDVEFSGVKEKAGYITPVPGGVGPMTIVMLMNNTIEAAERAKAVALAGGWHSSVQ</sequence>
<feature type="chain" id="PRO_0000268421" description="Bifunctional protein FolD">
    <location>
        <begin position="1"/>
        <end position="295"/>
    </location>
</feature>
<feature type="binding site" evidence="1">
    <location>
        <begin position="165"/>
        <end position="167"/>
    </location>
    <ligand>
        <name>NADP(+)</name>
        <dbReference type="ChEBI" id="CHEBI:58349"/>
    </ligand>
</feature>
<feature type="binding site" evidence="1">
    <location>
        <position position="190"/>
    </location>
    <ligand>
        <name>NADP(+)</name>
        <dbReference type="ChEBI" id="CHEBI:58349"/>
    </ligand>
</feature>
<feature type="binding site" evidence="1">
    <location>
        <position position="231"/>
    </location>
    <ligand>
        <name>NADP(+)</name>
        <dbReference type="ChEBI" id="CHEBI:58349"/>
    </ligand>
</feature>
<accession>Q82XC3</accession>
<evidence type="ECO:0000255" key="1">
    <source>
        <dbReference type="HAMAP-Rule" id="MF_01576"/>
    </source>
</evidence>